<keyword id="KW-0967">Endosome</keyword>
<keyword id="KW-0344">Guanine-nucleotide releasing factor</keyword>
<keyword id="KW-1185">Reference proteome</keyword>
<feature type="chain" id="PRO_0000438482" description="Vacuolar fusion protein CCZ1 homolog B">
    <location>
        <begin position="1"/>
        <end position="497"/>
    </location>
</feature>
<feature type="region of interest" description="Disordered" evidence="2">
    <location>
        <begin position="244"/>
        <end position="284"/>
    </location>
</feature>
<feature type="sequence conflict" description="In Ref. 3; BAH20009." evidence="5" ref="3">
    <original>R</original>
    <variation>G</variation>
    <location>
        <position position="460"/>
    </location>
</feature>
<protein>
    <recommendedName>
        <fullName evidence="5">Vacuolar fusion protein CCZ1 homolog B</fullName>
    </recommendedName>
</protein>
<comment type="function">
    <text evidence="1">Plays an important role in membrane trafficking through the secretory apparatus. In complex with MON1, acts as a guanine exchange factor (GEF) for RABG3F of the RAB7 protein family. Promotes the exchange of GDP to GTP, converting RABG3F from an inactive GDP-bound form into an active GTP-bound form. The RABG3F active form is involved in protein trafficking from prevacuolar compartments (PVCs) to vacuoles. May serve as a linker between Rab5 and Rab7 protein families in PVCs and mediate PVC maturation.</text>
</comment>
<comment type="subunit">
    <text evidence="3">Interacts with MON1.</text>
</comment>
<comment type="subcellular location">
    <subcellularLocation>
        <location evidence="1">Endosome</location>
    </subcellularLocation>
    <subcellularLocation>
        <location evidence="1">Prevacuolar compartment</location>
    </subcellularLocation>
</comment>
<comment type="similarity">
    <text evidence="5">Belongs to the CCZ1 family.</text>
</comment>
<comment type="sequence caution" evidence="5">
    <conflict type="erroneous gene model prediction">
        <sequence resource="EMBL-CDS" id="AAF14679"/>
    </conflict>
</comment>
<reference key="1">
    <citation type="journal article" date="2000" name="Nature">
        <title>Sequence and analysis of chromosome 1 of the plant Arabidopsis thaliana.</title>
        <authorList>
            <person name="Theologis A."/>
            <person name="Ecker J.R."/>
            <person name="Palm C.J."/>
            <person name="Federspiel N.A."/>
            <person name="Kaul S."/>
            <person name="White O."/>
            <person name="Alonso J."/>
            <person name="Altafi H."/>
            <person name="Araujo R."/>
            <person name="Bowman C.L."/>
            <person name="Brooks S.Y."/>
            <person name="Buehler E."/>
            <person name="Chan A."/>
            <person name="Chao Q."/>
            <person name="Chen H."/>
            <person name="Cheuk R.F."/>
            <person name="Chin C.W."/>
            <person name="Chung M.K."/>
            <person name="Conn L."/>
            <person name="Conway A.B."/>
            <person name="Conway A.R."/>
            <person name="Creasy T.H."/>
            <person name="Dewar K."/>
            <person name="Dunn P."/>
            <person name="Etgu P."/>
            <person name="Feldblyum T.V."/>
            <person name="Feng J.-D."/>
            <person name="Fong B."/>
            <person name="Fujii C.Y."/>
            <person name="Gill J.E."/>
            <person name="Goldsmith A.D."/>
            <person name="Haas B."/>
            <person name="Hansen N.F."/>
            <person name="Hughes B."/>
            <person name="Huizar L."/>
            <person name="Hunter J.L."/>
            <person name="Jenkins J."/>
            <person name="Johnson-Hopson C."/>
            <person name="Khan S."/>
            <person name="Khaykin E."/>
            <person name="Kim C.J."/>
            <person name="Koo H.L."/>
            <person name="Kremenetskaia I."/>
            <person name="Kurtz D.B."/>
            <person name="Kwan A."/>
            <person name="Lam B."/>
            <person name="Langin-Hooper S."/>
            <person name="Lee A."/>
            <person name="Lee J.M."/>
            <person name="Lenz C.A."/>
            <person name="Li J.H."/>
            <person name="Li Y.-P."/>
            <person name="Lin X."/>
            <person name="Liu S.X."/>
            <person name="Liu Z.A."/>
            <person name="Luros J.S."/>
            <person name="Maiti R."/>
            <person name="Marziali A."/>
            <person name="Militscher J."/>
            <person name="Miranda M."/>
            <person name="Nguyen M."/>
            <person name="Nierman W.C."/>
            <person name="Osborne B.I."/>
            <person name="Pai G."/>
            <person name="Peterson J."/>
            <person name="Pham P.K."/>
            <person name="Rizzo M."/>
            <person name="Rooney T."/>
            <person name="Rowley D."/>
            <person name="Sakano H."/>
            <person name="Salzberg S.L."/>
            <person name="Schwartz J.R."/>
            <person name="Shinn P."/>
            <person name="Southwick A.M."/>
            <person name="Sun H."/>
            <person name="Tallon L.J."/>
            <person name="Tambunga G."/>
            <person name="Toriumi M.J."/>
            <person name="Town C.D."/>
            <person name="Utterback T."/>
            <person name="Van Aken S."/>
            <person name="Vaysberg M."/>
            <person name="Vysotskaia V.S."/>
            <person name="Walker M."/>
            <person name="Wu D."/>
            <person name="Yu G."/>
            <person name="Fraser C.M."/>
            <person name="Venter J.C."/>
            <person name="Davis R.W."/>
        </authorList>
    </citation>
    <scope>NUCLEOTIDE SEQUENCE [LARGE SCALE GENOMIC DNA]</scope>
    <source>
        <strain>cv. Columbia</strain>
    </source>
</reference>
<reference key="2">
    <citation type="journal article" date="2017" name="Plant J.">
        <title>Araport11: a complete reannotation of the Arabidopsis thaliana reference genome.</title>
        <authorList>
            <person name="Cheng C.Y."/>
            <person name="Krishnakumar V."/>
            <person name="Chan A.P."/>
            <person name="Thibaud-Nissen F."/>
            <person name="Schobel S."/>
            <person name="Town C.D."/>
        </authorList>
    </citation>
    <scope>GENOME REANNOTATION</scope>
    <source>
        <strain>cv. Columbia</strain>
    </source>
</reference>
<reference key="3">
    <citation type="journal article" date="2009" name="DNA Res.">
        <title>Analysis of multiple occurrences of alternative splicing events in Arabidopsis thaliana using novel sequenced full-length cDNAs.</title>
        <authorList>
            <person name="Iida K."/>
            <person name="Fukami-Kobayashi K."/>
            <person name="Toyoda A."/>
            <person name="Sakaki Y."/>
            <person name="Kobayashi M."/>
            <person name="Seki M."/>
            <person name="Shinozaki K."/>
        </authorList>
    </citation>
    <scope>NUCLEOTIDE SEQUENCE [LARGE SCALE MRNA]</scope>
    <source>
        <strain>cv. Columbia</strain>
    </source>
</reference>
<reference key="4">
    <citation type="journal article" date="2014" name="Plant Cell">
        <title>Activation of the Rab7 GTPase by the MON1-CCZ1 complex is essential for PVC-to-vacuole trafficking and plant growth in Arabidopsis.</title>
        <authorList>
            <person name="Cui Y."/>
            <person name="Zhao Q."/>
            <person name="Gao C."/>
            <person name="Ding Y."/>
            <person name="Zeng Y."/>
            <person name="Ueda T."/>
            <person name="Nakano A."/>
            <person name="Jiang L."/>
        </authorList>
    </citation>
    <scope>INTERACTION WITH MON1</scope>
</reference>
<gene>
    <name evidence="4" type="primary">CCZ1B</name>
    <name evidence="6" type="ordered locus">At1g80910</name>
    <name evidence="7" type="ORF">F23A5.27</name>
</gene>
<accession>C0Z274</accession>
<accession>B9DGZ2</accession>
<accession>Q9SAG9</accession>
<sequence length="497" mass="55429">MGMASMSSGTESLRLCVFDLRRGQHEGQELDKILFFYPPDLTFSTQLSVIGLSEGLITFTRLFSPEAACEVIEAERHSHVFYEAEPDIWMVMIVEKNKEIEAVWRIDALRRVLKEVHSLFVMFQGSIRALLEKEPTGGLVRSHLYPFITDYLNDLFVGKKQQLPSFRDTLKERGTVQMLTLARDAALEVQSLVGVLDSCAGTVRCHSVILFHDLLVSTTLSPDDTVDLFAFSVMRLTTNALSSGTSSWSYLRKGSGSPQISSRSTTVPPLGSGGTLPSGNGSSTGRVIRPLQHDKWSKGKDGFLVTDIWGLDATPTILIQKTQESFYLLTYQYKSLTLVLLVPIAAIVNGELDISFVKQQVIENASTKILKVEEKLSKGWGGENAYHVSGYRYLLVDNDMEVSRASPPGKVATLAKESLLALNKLREEVDTEKNRSKQEKDMEICIRAKNNTWVIARLNRGKELYMALEKASETLLDATDSVQRFSNRYCSGAFPMD</sequence>
<organism>
    <name type="scientific">Arabidopsis thaliana</name>
    <name type="common">Mouse-ear cress</name>
    <dbReference type="NCBI Taxonomy" id="3702"/>
    <lineage>
        <taxon>Eukaryota</taxon>
        <taxon>Viridiplantae</taxon>
        <taxon>Streptophyta</taxon>
        <taxon>Embryophyta</taxon>
        <taxon>Tracheophyta</taxon>
        <taxon>Spermatophyta</taxon>
        <taxon>Magnoliopsida</taxon>
        <taxon>eudicotyledons</taxon>
        <taxon>Gunneridae</taxon>
        <taxon>Pentapetalae</taxon>
        <taxon>rosids</taxon>
        <taxon>malvids</taxon>
        <taxon>Brassicales</taxon>
        <taxon>Brassicaceae</taxon>
        <taxon>Camelineae</taxon>
        <taxon>Arabidopsis</taxon>
    </lineage>
</organism>
<name>CCZ1B_ARATH</name>
<proteinExistence type="evidence at protein level"/>
<dbReference type="EMBL" id="AC011713">
    <property type="protein sequence ID" value="AAF14679.1"/>
    <property type="status" value="ALT_SEQ"/>
    <property type="molecule type" value="Genomic_DNA"/>
</dbReference>
<dbReference type="EMBL" id="CP002684">
    <property type="protein sequence ID" value="AEE36466.1"/>
    <property type="molecule type" value="Genomic_DNA"/>
</dbReference>
<dbReference type="EMBL" id="AK317335">
    <property type="protein sequence ID" value="BAH20009.1"/>
    <property type="molecule type" value="mRNA"/>
</dbReference>
<dbReference type="EMBL" id="AK318688">
    <property type="protein sequence ID" value="BAH56803.1"/>
    <property type="molecule type" value="mRNA"/>
</dbReference>
<dbReference type="PIR" id="A96842">
    <property type="entry name" value="A96842"/>
</dbReference>
<dbReference type="RefSeq" id="NP_178206.1">
    <property type="nucleotide sequence ID" value="NM_106739.4"/>
</dbReference>
<dbReference type="SMR" id="C0Z274"/>
<dbReference type="FunCoup" id="C0Z274">
    <property type="interactions" value="3793"/>
</dbReference>
<dbReference type="IntAct" id="C0Z274">
    <property type="interactions" value="4"/>
</dbReference>
<dbReference type="STRING" id="3702.C0Z274"/>
<dbReference type="iPTMnet" id="C0Z274"/>
<dbReference type="PaxDb" id="3702-AT1G80910.1"/>
<dbReference type="ProteomicsDB" id="223877"/>
<dbReference type="DNASU" id="844431"/>
<dbReference type="EnsemblPlants" id="AT1G80910.1">
    <property type="protein sequence ID" value="AT1G80910.1"/>
    <property type="gene ID" value="AT1G80910"/>
</dbReference>
<dbReference type="GeneID" id="844431"/>
<dbReference type="Gramene" id="AT1G80910.1">
    <property type="protein sequence ID" value="AT1G80910.1"/>
    <property type="gene ID" value="AT1G80910"/>
</dbReference>
<dbReference type="KEGG" id="ath:AT1G80910"/>
<dbReference type="Araport" id="AT1G80910"/>
<dbReference type="TAIR" id="AT1G80910">
    <property type="gene designation" value="CCZ1B"/>
</dbReference>
<dbReference type="eggNOG" id="KOG2622">
    <property type="taxonomic scope" value="Eukaryota"/>
</dbReference>
<dbReference type="HOGENOM" id="CLU_037828_1_1_1"/>
<dbReference type="InParanoid" id="C0Z274"/>
<dbReference type="OMA" id="DCQALHT"/>
<dbReference type="PRO" id="PR:C0Z274"/>
<dbReference type="Proteomes" id="UP000006548">
    <property type="component" value="Chromosome 1"/>
</dbReference>
<dbReference type="ExpressionAtlas" id="C0Z274">
    <property type="expression patterns" value="baseline and differential"/>
</dbReference>
<dbReference type="GO" id="GO:0035658">
    <property type="term" value="C:Mon1-Ccz1 complex"/>
    <property type="evidence" value="ECO:0007669"/>
    <property type="project" value="InterPro"/>
</dbReference>
<dbReference type="GO" id="GO:0005085">
    <property type="term" value="F:guanyl-nucleotide exchange factor activity"/>
    <property type="evidence" value="ECO:0007669"/>
    <property type="project" value="UniProtKB-KW"/>
</dbReference>
<dbReference type="GO" id="GO:0016192">
    <property type="term" value="P:vesicle-mediated transport"/>
    <property type="evidence" value="ECO:0007669"/>
    <property type="project" value="InterPro"/>
</dbReference>
<dbReference type="InterPro" id="IPR013176">
    <property type="entry name" value="Ccz1"/>
</dbReference>
<dbReference type="InterPro" id="IPR043987">
    <property type="entry name" value="CCZ1/INTU/HSP4_longin_1"/>
</dbReference>
<dbReference type="PANTHER" id="PTHR13056">
    <property type="entry name" value="VACUOLAR FUSION PROTEIN CCZ1 HOMOLOG-RELATED"/>
    <property type="match status" value="1"/>
</dbReference>
<dbReference type="PANTHER" id="PTHR13056:SF0">
    <property type="entry name" value="VACUOLAR FUSION PROTEIN CCZ1 HOMOLOG-RELATED"/>
    <property type="match status" value="1"/>
</dbReference>
<dbReference type="Pfam" id="PF19031">
    <property type="entry name" value="Intu_longin_1"/>
    <property type="match status" value="1"/>
</dbReference>
<evidence type="ECO:0000250" key="1">
    <source>
        <dbReference type="UniProtKB" id="F4I2S4"/>
    </source>
</evidence>
<evidence type="ECO:0000256" key="2">
    <source>
        <dbReference type="SAM" id="MobiDB-lite"/>
    </source>
</evidence>
<evidence type="ECO:0000269" key="3">
    <source>
    </source>
</evidence>
<evidence type="ECO:0000303" key="4">
    <source>
    </source>
</evidence>
<evidence type="ECO:0000305" key="5"/>
<evidence type="ECO:0000312" key="6">
    <source>
        <dbReference type="Araport" id="AT1G80910"/>
    </source>
</evidence>
<evidence type="ECO:0000312" key="7">
    <source>
        <dbReference type="EMBL" id="AAF14679.1"/>
    </source>
</evidence>